<gene>
    <name type="primary">rps21</name>
    <name type="ORF">AFUA_2G03590</name>
</gene>
<name>RS21_ASPFU</name>
<proteinExistence type="inferred from homology"/>
<evidence type="ECO:0000250" key="1"/>
<evidence type="ECO:0000305" key="2"/>
<accession>Q4WI01</accession>
<organism>
    <name type="scientific">Aspergillus fumigatus (strain ATCC MYA-4609 / CBS 101355 / FGSC A1100 / Af293)</name>
    <name type="common">Neosartorya fumigata</name>
    <dbReference type="NCBI Taxonomy" id="330879"/>
    <lineage>
        <taxon>Eukaryota</taxon>
        <taxon>Fungi</taxon>
        <taxon>Dikarya</taxon>
        <taxon>Ascomycota</taxon>
        <taxon>Pezizomycotina</taxon>
        <taxon>Eurotiomycetes</taxon>
        <taxon>Eurotiomycetidae</taxon>
        <taxon>Eurotiales</taxon>
        <taxon>Aspergillaceae</taxon>
        <taxon>Aspergillus</taxon>
        <taxon>Aspergillus subgen. Fumigati</taxon>
    </lineage>
</organism>
<keyword id="KW-0963">Cytoplasm</keyword>
<keyword id="KW-1185">Reference proteome</keyword>
<keyword id="KW-0687">Ribonucleoprotein</keyword>
<keyword id="KW-0689">Ribosomal protein</keyword>
<keyword id="KW-0698">rRNA processing</keyword>
<feature type="chain" id="PRO_0000194755" description="Small ribosomal subunit protein eS21">
    <location>
        <begin position="1"/>
        <end position="88"/>
    </location>
</feature>
<dbReference type="EMBL" id="AAHF01000008">
    <property type="protein sequence ID" value="EAL87454.1"/>
    <property type="molecule type" value="Genomic_DNA"/>
</dbReference>
<dbReference type="RefSeq" id="XP_749492.1">
    <property type="nucleotide sequence ID" value="XM_744399.1"/>
</dbReference>
<dbReference type="SMR" id="Q4WI01"/>
<dbReference type="FunCoup" id="Q4WI01">
    <property type="interactions" value="915"/>
</dbReference>
<dbReference type="STRING" id="330879.Q4WI01"/>
<dbReference type="EnsemblFungi" id="EAL87454">
    <property type="protein sequence ID" value="EAL87454"/>
    <property type="gene ID" value="AFUA_2G03590"/>
</dbReference>
<dbReference type="GeneID" id="3507218"/>
<dbReference type="KEGG" id="afm:AFUA_2G03590"/>
<dbReference type="VEuPathDB" id="FungiDB:Afu2g03590"/>
<dbReference type="eggNOG" id="KOG3486">
    <property type="taxonomic scope" value="Eukaryota"/>
</dbReference>
<dbReference type="HOGENOM" id="CLU_167122_2_0_1"/>
<dbReference type="InParanoid" id="Q4WI01"/>
<dbReference type="OMA" id="GESDACM"/>
<dbReference type="OrthoDB" id="278325at2759"/>
<dbReference type="Proteomes" id="UP000002530">
    <property type="component" value="Chromosome 2"/>
</dbReference>
<dbReference type="GO" id="GO:0022627">
    <property type="term" value="C:cytosolic small ribosomal subunit"/>
    <property type="evidence" value="ECO:0000318"/>
    <property type="project" value="GO_Central"/>
</dbReference>
<dbReference type="GO" id="GO:0003735">
    <property type="term" value="F:structural constituent of ribosome"/>
    <property type="evidence" value="ECO:0000318"/>
    <property type="project" value="GO_Central"/>
</dbReference>
<dbReference type="GO" id="GO:0000447">
    <property type="term" value="P:endonucleolytic cleavage in ITS1 to separate SSU-rRNA from 5.8S rRNA and LSU-rRNA from tricistronic rRNA transcript (SSU-rRNA, 5.8S rRNA, LSU-rRNA)"/>
    <property type="evidence" value="ECO:0000318"/>
    <property type="project" value="GO_Central"/>
</dbReference>
<dbReference type="GO" id="GO:0000461">
    <property type="term" value="P:endonucleolytic cleavage to generate mature 3'-end of SSU-rRNA from (SSU-rRNA, 5.8S rRNA, LSU-rRNA)"/>
    <property type="evidence" value="ECO:0000318"/>
    <property type="project" value="GO_Central"/>
</dbReference>
<dbReference type="GO" id="GO:0006412">
    <property type="term" value="P:translation"/>
    <property type="evidence" value="ECO:0007669"/>
    <property type="project" value="InterPro"/>
</dbReference>
<dbReference type="FunFam" id="3.30.1230.20:FF:000001">
    <property type="entry name" value="40S ribosomal protein S21"/>
    <property type="match status" value="1"/>
</dbReference>
<dbReference type="Gene3D" id="3.30.1230.20">
    <property type="match status" value="1"/>
</dbReference>
<dbReference type="InterPro" id="IPR001931">
    <property type="entry name" value="Ribosomal_eS21"/>
</dbReference>
<dbReference type="InterPro" id="IPR018279">
    <property type="entry name" value="Ribosomal_eS21_CS"/>
</dbReference>
<dbReference type="InterPro" id="IPR038579">
    <property type="entry name" value="Ribosomal_eS21_sf"/>
</dbReference>
<dbReference type="PANTHER" id="PTHR10442">
    <property type="entry name" value="40S RIBOSOMAL PROTEIN S21"/>
    <property type="match status" value="1"/>
</dbReference>
<dbReference type="Pfam" id="PF01249">
    <property type="entry name" value="Ribosomal_S21e"/>
    <property type="match status" value="1"/>
</dbReference>
<dbReference type="PIRSF" id="PIRSF002148">
    <property type="entry name" value="Ribosomal_S21e"/>
    <property type="match status" value="1"/>
</dbReference>
<dbReference type="PROSITE" id="PS00996">
    <property type="entry name" value="RIBOSOMAL_S21E"/>
    <property type="match status" value="1"/>
</dbReference>
<comment type="function">
    <text evidence="1">Required for the processing of the 20S rRNA-precursor to mature 18S rRNA in a late step of the maturation of 40S ribosomal subunits. Has a physiological role leading to 18S rRNA stability (By similarity).</text>
</comment>
<comment type="subunit">
    <text>Component of the small ribosomal subunit. Mature ribosomes consist of a small (40S) and a large (60S) subunit. The 40S subunit contains about 33 different proteins and 1 molecule of RNA (18S). The 60S subunit contains about 49 different proteins and 3 molecules of RNA (25S, 5.8S and 5S).</text>
</comment>
<comment type="subcellular location">
    <subcellularLocation>
        <location evidence="1">Cytoplasm</location>
    </subcellularLocation>
</comment>
<comment type="similarity">
    <text evidence="2">Belongs to the eukaryotic ribosomal protein eS21 family.</text>
</comment>
<protein>
    <recommendedName>
        <fullName evidence="2">Small ribosomal subunit protein eS21</fullName>
    </recommendedName>
    <alternativeName>
        <fullName>40S ribosomal protein S21</fullName>
    </alternativeName>
</protein>
<sequence>MENEKGEIVDLYVPRKCSATNRIIKANDHASVQISIAKVDENGRYTGENQSYALCGFIRARGESDDSLNRLCQRDGYIRNVWSASRQR</sequence>
<reference key="1">
    <citation type="journal article" date="2005" name="Nature">
        <title>Genomic sequence of the pathogenic and allergenic filamentous fungus Aspergillus fumigatus.</title>
        <authorList>
            <person name="Nierman W.C."/>
            <person name="Pain A."/>
            <person name="Anderson M.J."/>
            <person name="Wortman J.R."/>
            <person name="Kim H.S."/>
            <person name="Arroyo J."/>
            <person name="Berriman M."/>
            <person name="Abe K."/>
            <person name="Archer D.B."/>
            <person name="Bermejo C."/>
            <person name="Bennett J.W."/>
            <person name="Bowyer P."/>
            <person name="Chen D."/>
            <person name="Collins M."/>
            <person name="Coulsen R."/>
            <person name="Davies R."/>
            <person name="Dyer P.S."/>
            <person name="Farman M.L."/>
            <person name="Fedorova N."/>
            <person name="Fedorova N.D."/>
            <person name="Feldblyum T.V."/>
            <person name="Fischer R."/>
            <person name="Fosker N."/>
            <person name="Fraser A."/>
            <person name="Garcia J.L."/>
            <person name="Garcia M.J."/>
            <person name="Goble A."/>
            <person name="Goldman G.H."/>
            <person name="Gomi K."/>
            <person name="Griffith-Jones S."/>
            <person name="Gwilliam R."/>
            <person name="Haas B.J."/>
            <person name="Haas H."/>
            <person name="Harris D.E."/>
            <person name="Horiuchi H."/>
            <person name="Huang J."/>
            <person name="Humphray S."/>
            <person name="Jimenez J."/>
            <person name="Keller N."/>
            <person name="Khouri H."/>
            <person name="Kitamoto K."/>
            <person name="Kobayashi T."/>
            <person name="Konzack S."/>
            <person name="Kulkarni R."/>
            <person name="Kumagai T."/>
            <person name="Lafton A."/>
            <person name="Latge J.-P."/>
            <person name="Li W."/>
            <person name="Lord A."/>
            <person name="Lu C."/>
            <person name="Majoros W.H."/>
            <person name="May G.S."/>
            <person name="Miller B.L."/>
            <person name="Mohamoud Y."/>
            <person name="Molina M."/>
            <person name="Monod M."/>
            <person name="Mouyna I."/>
            <person name="Mulligan S."/>
            <person name="Murphy L.D."/>
            <person name="O'Neil S."/>
            <person name="Paulsen I."/>
            <person name="Penalva M.A."/>
            <person name="Pertea M."/>
            <person name="Price C."/>
            <person name="Pritchard B.L."/>
            <person name="Quail M.A."/>
            <person name="Rabbinowitsch E."/>
            <person name="Rawlins N."/>
            <person name="Rajandream M.A."/>
            <person name="Reichard U."/>
            <person name="Renauld H."/>
            <person name="Robson G.D."/>
            <person name="Rodriguez de Cordoba S."/>
            <person name="Rodriguez-Pena J.M."/>
            <person name="Ronning C.M."/>
            <person name="Rutter S."/>
            <person name="Salzberg S.L."/>
            <person name="Sanchez M."/>
            <person name="Sanchez-Ferrero J.C."/>
            <person name="Saunders D."/>
            <person name="Seeger K."/>
            <person name="Squares R."/>
            <person name="Squares S."/>
            <person name="Takeuchi M."/>
            <person name="Tekaia F."/>
            <person name="Turner G."/>
            <person name="Vazquez de Aldana C.R."/>
            <person name="Weidman J."/>
            <person name="White O."/>
            <person name="Woodward J.R."/>
            <person name="Yu J.-H."/>
            <person name="Fraser C.M."/>
            <person name="Galagan J.E."/>
            <person name="Asai K."/>
            <person name="Machida M."/>
            <person name="Hall N."/>
            <person name="Barrell B.G."/>
            <person name="Denning D.W."/>
        </authorList>
    </citation>
    <scope>NUCLEOTIDE SEQUENCE [LARGE SCALE GENOMIC DNA]</scope>
    <source>
        <strain>ATCC MYA-4609 / CBS 101355 / FGSC A1100 / Af293</strain>
    </source>
</reference>